<accession>Q5UXB8</accession>
<proteinExistence type="inferred from homology"/>
<name>KPTA_HALMA</name>
<dbReference type="EC" id="2.7.1.-" evidence="1"/>
<dbReference type="EMBL" id="AY596297">
    <property type="protein sequence ID" value="AAV48085.1"/>
    <property type="molecule type" value="Genomic_DNA"/>
</dbReference>
<dbReference type="RefSeq" id="WP_011224785.1">
    <property type="nucleotide sequence ID" value="NC_006396.1"/>
</dbReference>
<dbReference type="SMR" id="Q5UXB8"/>
<dbReference type="STRING" id="272569.rrnAC3404"/>
<dbReference type="PaxDb" id="272569-rrnAC3404"/>
<dbReference type="EnsemblBacteria" id="AAV48085">
    <property type="protein sequence ID" value="AAV48085"/>
    <property type="gene ID" value="rrnAC3404"/>
</dbReference>
<dbReference type="GeneID" id="40154190"/>
<dbReference type="KEGG" id="hma:rrnAC3404"/>
<dbReference type="PATRIC" id="fig|272569.17.peg.3922"/>
<dbReference type="eggNOG" id="arCOG04063">
    <property type="taxonomic scope" value="Archaea"/>
</dbReference>
<dbReference type="HOGENOM" id="CLU_052998_4_1_2"/>
<dbReference type="Proteomes" id="UP000001169">
    <property type="component" value="Chromosome I"/>
</dbReference>
<dbReference type="GO" id="GO:0003950">
    <property type="term" value="F:NAD+ poly-ADP-ribosyltransferase activity"/>
    <property type="evidence" value="ECO:0007669"/>
    <property type="project" value="InterPro"/>
</dbReference>
<dbReference type="GO" id="GO:0000215">
    <property type="term" value="F:tRNA 2'-phosphotransferase activity"/>
    <property type="evidence" value="ECO:0007669"/>
    <property type="project" value="TreeGrafter"/>
</dbReference>
<dbReference type="GO" id="GO:0006388">
    <property type="term" value="P:tRNA splicing, via endonucleolytic cleavage and ligation"/>
    <property type="evidence" value="ECO:0007669"/>
    <property type="project" value="UniProtKB-UniRule"/>
</dbReference>
<dbReference type="Gene3D" id="3.20.170.30">
    <property type="match status" value="1"/>
</dbReference>
<dbReference type="Gene3D" id="1.10.10.970">
    <property type="entry name" value="RNA 2'-phosphotransferase, Tpt1/KptA family, N-terminal domain"/>
    <property type="match status" value="1"/>
</dbReference>
<dbReference type="HAMAP" id="MF_00299">
    <property type="entry name" value="KptA"/>
    <property type="match status" value="1"/>
</dbReference>
<dbReference type="InterPro" id="IPR002745">
    <property type="entry name" value="Ptrans_KptA/Tpt1"/>
</dbReference>
<dbReference type="InterPro" id="IPR042081">
    <property type="entry name" value="RNA_2'-PTrans_C"/>
</dbReference>
<dbReference type="InterPro" id="IPR022928">
    <property type="entry name" value="RNA_2'-PTrans_KptA"/>
</dbReference>
<dbReference type="InterPro" id="IPR042080">
    <property type="entry name" value="RNA_2'-PTrans_N"/>
</dbReference>
<dbReference type="PANTHER" id="PTHR12684">
    <property type="entry name" value="PUTATIVE PHOSPHOTRANSFERASE"/>
    <property type="match status" value="1"/>
</dbReference>
<dbReference type="PANTHER" id="PTHR12684:SF2">
    <property type="entry name" value="TRNA 2'-PHOSPHOTRANSFERASE 1"/>
    <property type="match status" value="1"/>
</dbReference>
<dbReference type="Pfam" id="PF01885">
    <property type="entry name" value="PTS_2-RNA"/>
    <property type="match status" value="1"/>
</dbReference>
<dbReference type="SUPFAM" id="SSF56399">
    <property type="entry name" value="ADP-ribosylation"/>
    <property type="match status" value="1"/>
</dbReference>
<reference key="1">
    <citation type="journal article" date="2004" name="Genome Res.">
        <title>Genome sequence of Haloarcula marismortui: a halophilic archaeon from the Dead Sea.</title>
        <authorList>
            <person name="Baliga N.S."/>
            <person name="Bonneau R."/>
            <person name="Facciotti M.T."/>
            <person name="Pan M."/>
            <person name="Glusman G."/>
            <person name="Deutsch E.W."/>
            <person name="Shannon P."/>
            <person name="Chiu Y."/>
            <person name="Weng R.S."/>
            <person name="Gan R.R."/>
            <person name="Hung P."/>
            <person name="Date S.V."/>
            <person name="Marcotte E."/>
            <person name="Hood L."/>
            <person name="Ng W.V."/>
        </authorList>
    </citation>
    <scope>NUCLEOTIDE SEQUENCE [LARGE SCALE GENOMIC DNA]</scope>
    <source>
        <strain>ATCC 43049 / DSM 3752 / JCM 8966 / VKM B-1809</strain>
    </source>
</reference>
<protein>
    <recommendedName>
        <fullName evidence="1">Probable RNA 2'-phosphotransferase</fullName>
        <ecNumber evidence="1">2.7.1.-</ecNumber>
    </recommendedName>
</protein>
<comment type="function">
    <text evidence="1">Removes the 2'-phosphate from RNA via an intermediate in which the phosphate is ADP-ribosylated by NAD followed by a presumed transesterification to release the RNA and generate ADP-ribose 1''-2''-cyclic phosphate (APPR&gt;P). May function as an ADP-ribosylase.</text>
</comment>
<comment type="similarity">
    <text evidence="1">Belongs to the KptA/TPT1 family.</text>
</comment>
<feature type="chain" id="PRO_0000231957" description="Probable RNA 2'-phosphotransferase">
    <location>
        <begin position="1"/>
        <end position="222"/>
    </location>
</feature>
<gene>
    <name evidence="1" type="primary">kptA</name>
    <name type="ordered locus">rrnAC3404</name>
</gene>
<keyword id="KW-0520">NAD</keyword>
<keyword id="KW-1185">Reference proteome</keyword>
<keyword id="KW-0808">Transferase</keyword>
<organism>
    <name type="scientific">Haloarcula marismortui (strain ATCC 43049 / DSM 3752 / JCM 8966 / VKM B-1809)</name>
    <name type="common">Halobacterium marismortui</name>
    <dbReference type="NCBI Taxonomy" id="272569"/>
    <lineage>
        <taxon>Archaea</taxon>
        <taxon>Methanobacteriati</taxon>
        <taxon>Methanobacteriota</taxon>
        <taxon>Stenosarchaea group</taxon>
        <taxon>Halobacteria</taxon>
        <taxon>Halobacteriales</taxon>
        <taxon>Haloarculaceae</taxon>
        <taxon>Haloarcula</taxon>
    </lineage>
</organism>
<evidence type="ECO:0000255" key="1">
    <source>
        <dbReference type="HAMAP-Rule" id="MF_00299"/>
    </source>
</evidence>
<sequence length="222" mass="23867">MPDAVRRCPEDGFFEGDTCPVCDGAGTHILDGARRRQLSKFVSGALRHFPEDAGIEVDKAGWTGFDALRVAVERQYDWADAAALAGVIATDPKGRFERTGVGNEAGITTAGGRVRAAYGHSVDVTLDGTDDPVPATLYHGTAPRNVDSIREAGLKPMSRQTVHLSESAAAAREVGRRHAADPVVFVVDATAMQSDDRRIVKRGTETYTTDRVSPVYLSLLEK</sequence>